<evidence type="ECO:0000255" key="1">
    <source>
        <dbReference type="HAMAP-Rule" id="MF_01325"/>
    </source>
</evidence>
<evidence type="ECO:0000305" key="2"/>
<keyword id="KW-0488">Methylation</keyword>
<keyword id="KW-1185">Reference proteome</keyword>
<keyword id="KW-0687">Ribonucleoprotein</keyword>
<keyword id="KW-0689">Ribosomal protein</keyword>
<keyword id="KW-0694">RNA-binding</keyword>
<keyword id="KW-0699">rRNA-binding</keyword>
<protein>
    <recommendedName>
        <fullName evidence="1">Large ribosomal subunit protein uL3</fullName>
    </recommendedName>
    <alternativeName>
        <fullName evidence="2">50S ribosomal protein L3</fullName>
    </alternativeName>
</protein>
<accession>Q5P332</accession>
<dbReference type="EMBL" id="CR555306">
    <property type="protein sequence ID" value="CAI08282.1"/>
    <property type="molecule type" value="Genomic_DNA"/>
</dbReference>
<dbReference type="RefSeq" id="WP_011237972.1">
    <property type="nucleotide sequence ID" value="NC_006513.1"/>
</dbReference>
<dbReference type="SMR" id="Q5P332"/>
<dbReference type="STRING" id="76114.ebA3828"/>
<dbReference type="KEGG" id="eba:ebA3828"/>
<dbReference type="eggNOG" id="COG0087">
    <property type="taxonomic scope" value="Bacteria"/>
</dbReference>
<dbReference type="HOGENOM" id="CLU_044142_4_1_4"/>
<dbReference type="OrthoDB" id="9806135at2"/>
<dbReference type="Proteomes" id="UP000006552">
    <property type="component" value="Chromosome"/>
</dbReference>
<dbReference type="GO" id="GO:0022625">
    <property type="term" value="C:cytosolic large ribosomal subunit"/>
    <property type="evidence" value="ECO:0007669"/>
    <property type="project" value="TreeGrafter"/>
</dbReference>
<dbReference type="GO" id="GO:0019843">
    <property type="term" value="F:rRNA binding"/>
    <property type="evidence" value="ECO:0007669"/>
    <property type="project" value="UniProtKB-UniRule"/>
</dbReference>
<dbReference type="GO" id="GO:0003735">
    <property type="term" value="F:structural constituent of ribosome"/>
    <property type="evidence" value="ECO:0007669"/>
    <property type="project" value="InterPro"/>
</dbReference>
<dbReference type="GO" id="GO:0006412">
    <property type="term" value="P:translation"/>
    <property type="evidence" value="ECO:0007669"/>
    <property type="project" value="UniProtKB-UniRule"/>
</dbReference>
<dbReference type="FunFam" id="2.40.30.10:FF:000004">
    <property type="entry name" value="50S ribosomal protein L3"/>
    <property type="match status" value="1"/>
</dbReference>
<dbReference type="FunFam" id="3.30.160.810:FF:000001">
    <property type="entry name" value="50S ribosomal protein L3"/>
    <property type="match status" value="1"/>
</dbReference>
<dbReference type="Gene3D" id="3.30.160.810">
    <property type="match status" value="1"/>
</dbReference>
<dbReference type="Gene3D" id="2.40.30.10">
    <property type="entry name" value="Translation factors"/>
    <property type="match status" value="1"/>
</dbReference>
<dbReference type="HAMAP" id="MF_01325_B">
    <property type="entry name" value="Ribosomal_uL3_B"/>
    <property type="match status" value="1"/>
</dbReference>
<dbReference type="InterPro" id="IPR000597">
    <property type="entry name" value="Ribosomal_uL3"/>
</dbReference>
<dbReference type="InterPro" id="IPR019927">
    <property type="entry name" value="Ribosomal_uL3_bac/org-type"/>
</dbReference>
<dbReference type="InterPro" id="IPR019926">
    <property type="entry name" value="Ribosomal_uL3_CS"/>
</dbReference>
<dbReference type="InterPro" id="IPR009000">
    <property type="entry name" value="Transl_B-barrel_sf"/>
</dbReference>
<dbReference type="NCBIfam" id="TIGR03625">
    <property type="entry name" value="L3_bact"/>
    <property type="match status" value="1"/>
</dbReference>
<dbReference type="PANTHER" id="PTHR11229">
    <property type="entry name" value="50S RIBOSOMAL PROTEIN L3"/>
    <property type="match status" value="1"/>
</dbReference>
<dbReference type="PANTHER" id="PTHR11229:SF16">
    <property type="entry name" value="LARGE RIBOSOMAL SUBUNIT PROTEIN UL3C"/>
    <property type="match status" value="1"/>
</dbReference>
<dbReference type="Pfam" id="PF00297">
    <property type="entry name" value="Ribosomal_L3"/>
    <property type="match status" value="1"/>
</dbReference>
<dbReference type="SUPFAM" id="SSF50447">
    <property type="entry name" value="Translation proteins"/>
    <property type="match status" value="1"/>
</dbReference>
<dbReference type="PROSITE" id="PS00474">
    <property type="entry name" value="RIBOSOMAL_L3"/>
    <property type="match status" value="1"/>
</dbReference>
<comment type="function">
    <text evidence="1">One of the primary rRNA binding proteins, it binds directly near the 3'-end of the 23S rRNA, where it nucleates assembly of the 50S subunit.</text>
</comment>
<comment type="subunit">
    <text evidence="1">Part of the 50S ribosomal subunit. Forms a cluster with proteins L14 and L19.</text>
</comment>
<comment type="PTM">
    <text evidence="1">Methylated by PrmB.</text>
</comment>
<comment type="similarity">
    <text evidence="1">Belongs to the universal ribosomal protein uL3 family.</text>
</comment>
<gene>
    <name evidence="1" type="primary">rplC</name>
    <name type="ordered locus">AZOSEA21570</name>
    <name type="ORF">ebA3828</name>
</gene>
<feature type="chain" id="PRO_0000241309" description="Large ribosomal subunit protein uL3">
    <location>
        <begin position="1"/>
        <end position="214"/>
    </location>
</feature>
<feature type="modified residue" description="N5-methylglutamine" evidence="1">
    <location>
        <position position="153"/>
    </location>
</feature>
<organism>
    <name type="scientific">Aromatoleum aromaticum (strain DSM 19018 / LMG 30748 / EbN1)</name>
    <name type="common">Azoarcus sp. (strain EbN1)</name>
    <dbReference type="NCBI Taxonomy" id="76114"/>
    <lineage>
        <taxon>Bacteria</taxon>
        <taxon>Pseudomonadati</taxon>
        <taxon>Pseudomonadota</taxon>
        <taxon>Betaproteobacteria</taxon>
        <taxon>Rhodocyclales</taxon>
        <taxon>Rhodocyclaceae</taxon>
        <taxon>Aromatoleum</taxon>
    </lineage>
</organism>
<sequence>MSLGLVGRKVGMTRIFAEDGRSVPVTVLDVSNNRVTQIKTPESDGYAAVQVTFGKRRASRVGKPLAGHLAKAGVEAGHMLKEFRVETEQVAGFKAGDVVGVDLFAVGQKVDVTGTSIGKGFSGVGKRHNFSSNRASHGNSVSHNAPGSIGMAQDPGRVFPGKRMAGQYGNTTCTTQGLEVVRVDVERQLLLVKGAVPGSKGGDVIVRPAVKARG</sequence>
<name>RL3_AROAE</name>
<proteinExistence type="inferred from homology"/>
<reference key="1">
    <citation type="journal article" date="2005" name="Arch. Microbiol.">
        <title>The genome sequence of an anaerobic aromatic-degrading denitrifying bacterium, strain EbN1.</title>
        <authorList>
            <person name="Rabus R."/>
            <person name="Kube M."/>
            <person name="Heider J."/>
            <person name="Beck A."/>
            <person name="Heitmann K."/>
            <person name="Widdel F."/>
            <person name="Reinhardt R."/>
        </authorList>
    </citation>
    <scope>NUCLEOTIDE SEQUENCE [LARGE SCALE GENOMIC DNA]</scope>
    <source>
        <strain>DSM 19018 / LMG 30748 / EbN1</strain>
    </source>
</reference>